<protein>
    <recommendedName>
        <fullName evidence="1">D-aminoacyl-tRNA deacylase</fullName>
        <shortName evidence="1">DTD</shortName>
        <ecNumber evidence="1">3.1.1.96</ecNumber>
    </recommendedName>
    <alternativeName>
        <fullName evidence="1">Gly-tRNA(Ala) deacylase</fullName>
    </alternativeName>
</protein>
<sequence length="147" mass="16076">MKIVIQRVQSASVAIEDSTVGTIKQGLLLLVGVGPEDTKEDLDYAVRKIINMRIFSDEDGKMNLSVKDIGGQILSISQFTLFADTKKGNRPAFTGAAKPDMASQFYDDFNQSLSSYVPVERGRFGADMQVSLVNDGPVTVILDTKNR</sequence>
<gene>
    <name evidence="1" type="primary">dtd</name>
    <name type="ordered locus">STER_0201</name>
</gene>
<organism>
    <name type="scientific">Streptococcus thermophilus (strain ATCC BAA-491 / LMD-9)</name>
    <dbReference type="NCBI Taxonomy" id="322159"/>
    <lineage>
        <taxon>Bacteria</taxon>
        <taxon>Bacillati</taxon>
        <taxon>Bacillota</taxon>
        <taxon>Bacilli</taxon>
        <taxon>Lactobacillales</taxon>
        <taxon>Streptococcaceae</taxon>
        <taxon>Streptococcus</taxon>
    </lineage>
</organism>
<keyword id="KW-0963">Cytoplasm</keyword>
<keyword id="KW-0378">Hydrolase</keyword>
<keyword id="KW-0694">RNA-binding</keyword>
<keyword id="KW-0820">tRNA-binding</keyword>
<proteinExistence type="inferred from homology"/>
<dbReference type="EC" id="3.1.1.96" evidence="1"/>
<dbReference type="EMBL" id="CP000419">
    <property type="protein sequence ID" value="ABJ65523.1"/>
    <property type="molecule type" value="Genomic_DNA"/>
</dbReference>
<dbReference type="RefSeq" id="WP_004197391.1">
    <property type="nucleotide sequence ID" value="NC_008532.1"/>
</dbReference>
<dbReference type="SMR" id="Q03MP9"/>
<dbReference type="GeneID" id="66898090"/>
<dbReference type="KEGG" id="ste:STER_0201"/>
<dbReference type="HOGENOM" id="CLU_076901_1_0_9"/>
<dbReference type="GO" id="GO:0005737">
    <property type="term" value="C:cytoplasm"/>
    <property type="evidence" value="ECO:0007669"/>
    <property type="project" value="UniProtKB-SubCell"/>
</dbReference>
<dbReference type="GO" id="GO:0051500">
    <property type="term" value="F:D-tyrosyl-tRNA(Tyr) deacylase activity"/>
    <property type="evidence" value="ECO:0007669"/>
    <property type="project" value="TreeGrafter"/>
</dbReference>
<dbReference type="GO" id="GO:0106026">
    <property type="term" value="F:Gly-tRNA(Ala) deacylase activity"/>
    <property type="evidence" value="ECO:0007669"/>
    <property type="project" value="UniProtKB-UniRule"/>
</dbReference>
<dbReference type="GO" id="GO:0043908">
    <property type="term" value="F:Ser(Gly)-tRNA(Ala) hydrolase activity"/>
    <property type="evidence" value="ECO:0007669"/>
    <property type="project" value="UniProtKB-UniRule"/>
</dbReference>
<dbReference type="GO" id="GO:0000049">
    <property type="term" value="F:tRNA binding"/>
    <property type="evidence" value="ECO:0007669"/>
    <property type="project" value="UniProtKB-UniRule"/>
</dbReference>
<dbReference type="GO" id="GO:0019478">
    <property type="term" value="P:D-amino acid catabolic process"/>
    <property type="evidence" value="ECO:0007669"/>
    <property type="project" value="UniProtKB-UniRule"/>
</dbReference>
<dbReference type="CDD" id="cd00563">
    <property type="entry name" value="Dtyr_deacylase"/>
    <property type="match status" value="1"/>
</dbReference>
<dbReference type="FunFam" id="3.50.80.10:FF:000001">
    <property type="entry name" value="D-aminoacyl-tRNA deacylase"/>
    <property type="match status" value="1"/>
</dbReference>
<dbReference type="Gene3D" id="3.50.80.10">
    <property type="entry name" value="D-tyrosyl-tRNA(Tyr) deacylase"/>
    <property type="match status" value="1"/>
</dbReference>
<dbReference type="HAMAP" id="MF_00518">
    <property type="entry name" value="Deacylase_Dtd"/>
    <property type="match status" value="1"/>
</dbReference>
<dbReference type="InterPro" id="IPR003732">
    <property type="entry name" value="Daa-tRNA_deacyls_DTD"/>
</dbReference>
<dbReference type="InterPro" id="IPR023509">
    <property type="entry name" value="DTD-like_sf"/>
</dbReference>
<dbReference type="NCBIfam" id="TIGR00256">
    <property type="entry name" value="D-aminoacyl-tRNA deacylase"/>
    <property type="match status" value="1"/>
</dbReference>
<dbReference type="PANTHER" id="PTHR10472:SF5">
    <property type="entry name" value="D-AMINOACYL-TRNA DEACYLASE 1"/>
    <property type="match status" value="1"/>
</dbReference>
<dbReference type="PANTHER" id="PTHR10472">
    <property type="entry name" value="D-TYROSYL-TRNA TYR DEACYLASE"/>
    <property type="match status" value="1"/>
</dbReference>
<dbReference type="Pfam" id="PF02580">
    <property type="entry name" value="Tyr_Deacylase"/>
    <property type="match status" value="1"/>
</dbReference>
<dbReference type="SUPFAM" id="SSF69500">
    <property type="entry name" value="DTD-like"/>
    <property type="match status" value="1"/>
</dbReference>
<feature type="chain" id="PRO_1000050898" description="D-aminoacyl-tRNA deacylase">
    <location>
        <begin position="1"/>
        <end position="147"/>
    </location>
</feature>
<feature type="short sequence motif" description="Gly-cisPro motif, important for rejection of L-amino acids" evidence="1">
    <location>
        <begin position="136"/>
        <end position="137"/>
    </location>
</feature>
<name>DTD_STRTD</name>
<accession>Q03MP9</accession>
<evidence type="ECO:0000255" key="1">
    <source>
        <dbReference type="HAMAP-Rule" id="MF_00518"/>
    </source>
</evidence>
<comment type="function">
    <text evidence="1">An aminoacyl-tRNA editing enzyme that deacylates mischarged D-aminoacyl-tRNAs. Also deacylates mischarged glycyl-tRNA(Ala), protecting cells against glycine mischarging by AlaRS. Acts via tRNA-based rather than protein-based catalysis; rejects L-amino acids rather than detecting D-amino acids in the active site. By recycling D-aminoacyl-tRNA to D-amino acids and free tRNA molecules, this enzyme counteracts the toxicity associated with the formation of D-aminoacyl-tRNA entities in vivo and helps enforce protein L-homochirality.</text>
</comment>
<comment type="catalytic activity">
    <reaction evidence="1">
        <text>glycyl-tRNA(Ala) + H2O = tRNA(Ala) + glycine + H(+)</text>
        <dbReference type="Rhea" id="RHEA:53744"/>
        <dbReference type="Rhea" id="RHEA-COMP:9657"/>
        <dbReference type="Rhea" id="RHEA-COMP:13640"/>
        <dbReference type="ChEBI" id="CHEBI:15377"/>
        <dbReference type="ChEBI" id="CHEBI:15378"/>
        <dbReference type="ChEBI" id="CHEBI:57305"/>
        <dbReference type="ChEBI" id="CHEBI:78442"/>
        <dbReference type="ChEBI" id="CHEBI:78522"/>
        <dbReference type="EC" id="3.1.1.96"/>
    </reaction>
</comment>
<comment type="catalytic activity">
    <reaction evidence="1">
        <text>a D-aminoacyl-tRNA + H2O = a tRNA + a D-alpha-amino acid + H(+)</text>
        <dbReference type="Rhea" id="RHEA:13953"/>
        <dbReference type="Rhea" id="RHEA-COMP:10123"/>
        <dbReference type="Rhea" id="RHEA-COMP:10124"/>
        <dbReference type="ChEBI" id="CHEBI:15377"/>
        <dbReference type="ChEBI" id="CHEBI:15378"/>
        <dbReference type="ChEBI" id="CHEBI:59871"/>
        <dbReference type="ChEBI" id="CHEBI:78442"/>
        <dbReference type="ChEBI" id="CHEBI:79333"/>
        <dbReference type="EC" id="3.1.1.96"/>
    </reaction>
</comment>
<comment type="subunit">
    <text evidence="1">Homodimer.</text>
</comment>
<comment type="subcellular location">
    <subcellularLocation>
        <location evidence="1">Cytoplasm</location>
    </subcellularLocation>
</comment>
<comment type="domain">
    <text evidence="1">A Gly-cisPro motif from one monomer fits into the active site of the other monomer to allow specific chiral rejection of L-amino acids.</text>
</comment>
<comment type="similarity">
    <text evidence="1">Belongs to the DTD family.</text>
</comment>
<reference key="1">
    <citation type="journal article" date="2006" name="Proc. Natl. Acad. Sci. U.S.A.">
        <title>Comparative genomics of the lactic acid bacteria.</title>
        <authorList>
            <person name="Makarova K.S."/>
            <person name="Slesarev A."/>
            <person name="Wolf Y.I."/>
            <person name="Sorokin A."/>
            <person name="Mirkin B."/>
            <person name="Koonin E.V."/>
            <person name="Pavlov A."/>
            <person name="Pavlova N."/>
            <person name="Karamychev V."/>
            <person name="Polouchine N."/>
            <person name="Shakhova V."/>
            <person name="Grigoriev I."/>
            <person name="Lou Y."/>
            <person name="Rohksar D."/>
            <person name="Lucas S."/>
            <person name="Huang K."/>
            <person name="Goodstein D.M."/>
            <person name="Hawkins T."/>
            <person name="Plengvidhya V."/>
            <person name="Welker D."/>
            <person name="Hughes J."/>
            <person name="Goh Y."/>
            <person name="Benson A."/>
            <person name="Baldwin K."/>
            <person name="Lee J.-H."/>
            <person name="Diaz-Muniz I."/>
            <person name="Dosti B."/>
            <person name="Smeianov V."/>
            <person name="Wechter W."/>
            <person name="Barabote R."/>
            <person name="Lorca G."/>
            <person name="Altermann E."/>
            <person name="Barrangou R."/>
            <person name="Ganesan B."/>
            <person name="Xie Y."/>
            <person name="Rawsthorne H."/>
            <person name="Tamir D."/>
            <person name="Parker C."/>
            <person name="Breidt F."/>
            <person name="Broadbent J.R."/>
            <person name="Hutkins R."/>
            <person name="O'Sullivan D."/>
            <person name="Steele J."/>
            <person name="Unlu G."/>
            <person name="Saier M.H. Jr."/>
            <person name="Klaenhammer T."/>
            <person name="Richardson P."/>
            <person name="Kozyavkin S."/>
            <person name="Weimer B.C."/>
            <person name="Mills D.A."/>
        </authorList>
    </citation>
    <scope>NUCLEOTIDE SEQUENCE [LARGE SCALE GENOMIC DNA]</scope>
    <source>
        <strain>ATCC BAA-491 / LMD-9</strain>
    </source>
</reference>